<dbReference type="EMBL" id="AB007650">
    <property type="protein sequence ID" value="BAB08283.1"/>
    <property type="molecule type" value="Genomic_DNA"/>
</dbReference>
<dbReference type="EMBL" id="CP002688">
    <property type="protein sequence ID" value="AED91980.1"/>
    <property type="molecule type" value="Genomic_DNA"/>
</dbReference>
<dbReference type="EMBL" id="AY058848">
    <property type="protein sequence ID" value="AAL24236.1"/>
    <property type="molecule type" value="mRNA"/>
</dbReference>
<dbReference type="EMBL" id="AY143869">
    <property type="protein sequence ID" value="AAN28808.1"/>
    <property type="molecule type" value="mRNA"/>
</dbReference>
<dbReference type="EMBL" id="AB016066">
    <property type="protein sequence ID" value="BAA31585.1"/>
    <property type="molecule type" value="mRNA"/>
</dbReference>
<dbReference type="EMBL" id="AK222060">
    <property type="protein sequence ID" value="BAD94852.1"/>
    <property type="status" value="ALT_INIT"/>
    <property type="molecule type" value="mRNA"/>
</dbReference>
<dbReference type="PIR" id="T51595">
    <property type="entry name" value="T51595"/>
</dbReference>
<dbReference type="RefSeq" id="NP_196908.1">
    <property type="nucleotide sequence ID" value="NM_121407.3"/>
</dbReference>
<dbReference type="SMR" id="Q9FMU6"/>
<dbReference type="BioGRID" id="16530">
    <property type="interactions" value="24"/>
</dbReference>
<dbReference type="FunCoup" id="Q9FMU6">
    <property type="interactions" value="3397"/>
</dbReference>
<dbReference type="IntAct" id="Q9FMU6">
    <property type="interactions" value="1"/>
</dbReference>
<dbReference type="MINT" id="Q9FMU6"/>
<dbReference type="STRING" id="3702.Q9FMU6"/>
<dbReference type="TCDB" id="2.A.29.4.6">
    <property type="family name" value="the mitochondrial carrier (mc) family"/>
</dbReference>
<dbReference type="PaxDb" id="3702-AT5G14040.1"/>
<dbReference type="ProteomicsDB" id="239065"/>
<dbReference type="EnsemblPlants" id="AT5G14040.1">
    <property type="protein sequence ID" value="AT5G14040.1"/>
    <property type="gene ID" value="AT5G14040"/>
</dbReference>
<dbReference type="GeneID" id="831252"/>
<dbReference type="Gramene" id="AT5G14040.1">
    <property type="protein sequence ID" value="AT5G14040.1"/>
    <property type="gene ID" value="AT5G14040"/>
</dbReference>
<dbReference type="KEGG" id="ath:AT5G14040"/>
<dbReference type="Araport" id="AT5G14040"/>
<dbReference type="TAIR" id="AT5G14040">
    <property type="gene designation" value="PHT3"/>
</dbReference>
<dbReference type="eggNOG" id="KOG0767">
    <property type="taxonomic scope" value="Eukaryota"/>
</dbReference>
<dbReference type="HOGENOM" id="CLU_039456_0_1_1"/>
<dbReference type="InParanoid" id="Q9FMU6"/>
<dbReference type="OMA" id="PAVWANS"/>
<dbReference type="OrthoDB" id="427452at2759"/>
<dbReference type="PhylomeDB" id="Q9FMU6"/>
<dbReference type="BRENDA" id="7.3.2.1">
    <property type="organism ID" value="399"/>
</dbReference>
<dbReference type="CD-CODE" id="4299E36E">
    <property type="entry name" value="Nucleolus"/>
</dbReference>
<dbReference type="PRO" id="PR:Q9FMU6"/>
<dbReference type="Proteomes" id="UP000006548">
    <property type="component" value="Chromosome 5"/>
</dbReference>
<dbReference type="ExpressionAtlas" id="Q9FMU6">
    <property type="expression patterns" value="baseline and differential"/>
</dbReference>
<dbReference type="GO" id="GO:0005743">
    <property type="term" value="C:mitochondrial inner membrane"/>
    <property type="evidence" value="ECO:0007669"/>
    <property type="project" value="UniProtKB-SubCell"/>
</dbReference>
<dbReference type="GO" id="GO:0005739">
    <property type="term" value="C:mitochondrion"/>
    <property type="evidence" value="ECO:0007005"/>
    <property type="project" value="TAIR"/>
</dbReference>
<dbReference type="GO" id="GO:0009505">
    <property type="term" value="C:plant-type cell wall"/>
    <property type="evidence" value="ECO:0007005"/>
    <property type="project" value="TAIR"/>
</dbReference>
<dbReference type="GO" id="GO:0000325">
    <property type="term" value="C:plant-type vacuole"/>
    <property type="evidence" value="ECO:0007005"/>
    <property type="project" value="TAIR"/>
</dbReference>
<dbReference type="GO" id="GO:0003729">
    <property type="term" value="F:mRNA binding"/>
    <property type="evidence" value="ECO:0000314"/>
    <property type="project" value="TAIR"/>
</dbReference>
<dbReference type="GO" id="GO:0005315">
    <property type="term" value="F:phosphate transmembrane transporter activity"/>
    <property type="evidence" value="ECO:0007669"/>
    <property type="project" value="InterPro"/>
</dbReference>
<dbReference type="GO" id="GO:1990547">
    <property type="term" value="P:mitochondrial phosphate ion transmembrane transport"/>
    <property type="evidence" value="ECO:0007669"/>
    <property type="project" value="InterPro"/>
</dbReference>
<dbReference type="GO" id="GO:0009651">
    <property type="term" value="P:response to salt stress"/>
    <property type="evidence" value="ECO:0000315"/>
    <property type="project" value="TAIR"/>
</dbReference>
<dbReference type="FunFam" id="1.50.40.10:FF:000012">
    <property type="entry name" value="Phosphate carrier protein, mitochondrial"/>
    <property type="match status" value="1"/>
</dbReference>
<dbReference type="Gene3D" id="1.50.40.10">
    <property type="entry name" value="Mitochondrial carrier domain"/>
    <property type="match status" value="1"/>
</dbReference>
<dbReference type="InterPro" id="IPR018108">
    <property type="entry name" value="Mitochondrial_sb/sol_carrier"/>
</dbReference>
<dbReference type="InterPro" id="IPR023395">
    <property type="entry name" value="Mt_carrier_dom_sf"/>
</dbReference>
<dbReference type="InterPro" id="IPR044677">
    <property type="entry name" value="SLC25A3/Pic2/Mir1-like"/>
</dbReference>
<dbReference type="PANTHER" id="PTHR45671">
    <property type="entry name" value="SOLUTE CARRIER FAMILY 25 (MITOCHONDRIAL CARRIER PHOSPHATE CARRIER), MEMBER 3, LIKE-RELATED-RELATED"/>
    <property type="match status" value="1"/>
</dbReference>
<dbReference type="PANTHER" id="PTHR45671:SF10">
    <property type="entry name" value="SOLUTE CARRIER FAMILY 25 MEMBER 3"/>
    <property type="match status" value="1"/>
</dbReference>
<dbReference type="Pfam" id="PF00153">
    <property type="entry name" value="Mito_carr"/>
    <property type="match status" value="2"/>
</dbReference>
<dbReference type="SUPFAM" id="SSF103506">
    <property type="entry name" value="Mitochondrial carrier"/>
    <property type="match status" value="1"/>
</dbReference>
<dbReference type="PROSITE" id="PS50920">
    <property type="entry name" value="SOLCAR"/>
    <property type="match status" value="3"/>
</dbReference>
<proteinExistence type="evidence at protein level"/>
<evidence type="ECO:0000255" key="1"/>
<evidence type="ECO:0000269" key="2">
    <source>
    </source>
</evidence>
<evidence type="ECO:0000269" key="3">
    <source>
    </source>
</evidence>
<evidence type="ECO:0000269" key="4">
    <source>
    </source>
</evidence>
<evidence type="ECO:0000305" key="5"/>
<evidence type="ECO:0000305" key="6">
    <source>
    </source>
</evidence>
<keyword id="KW-0472">Membrane</keyword>
<keyword id="KW-0496">Mitochondrion</keyword>
<keyword id="KW-0999">Mitochondrion inner membrane</keyword>
<keyword id="KW-1185">Reference proteome</keyword>
<keyword id="KW-0677">Repeat</keyword>
<keyword id="KW-0809">Transit peptide</keyword>
<keyword id="KW-0812">Transmembrane</keyword>
<keyword id="KW-1133">Transmembrane helix</keyword>
<keyword id="KW-0813">Transport</keyword>
<organism>
    <name type="scientific">Arabidopsis thaliana</name>
    <name type="common">Mouse-ear cress</name>
    <dbReference type="NCBI Taxonomy" id="3702"/>
    <lineage>
        <taxon>Eukaryota</taxon>
        <taxon>Viridiplantae</taxon>
        <taxon>Streptophyta</taxon>
        <taxon>Embryophyta</taxon>
        <taxon>Tracheophyta</taxon>
        <taxon>Spermatophyta</taxon>
        <taxon>Magnoliopsida</taxon>
        <taxon>eudicotyledons</taxon>
        <taxon>Gunneridae</taxon>
        <taxon>Pentapetalae</taxon>
        <taxon>rosids</taxon>
        <taxon>malvids</taxon>
        <taxon>Brassicales</taxon>
        <taxon>Brassicaceae</taxon>
        <taxon>Camelineae</taxon>
        <taxon>Arabidopsis</taxon>
    </lineage>
</organism>
<sequence length="375" mass="40090">MESPKNSLIPSFLYSSSSSPRSFLLDQVLNSNSNAAFEKSPSPAPRSSPTSMISRKNFLIASPTEPGKGIEMYSPAFYAACTFGGILSCGLTHMTVTPLDLVKCNMQIDPAKYKSISSGFGILLKEQGVKGFFRGWVPTLLGYSAQGACKFGFYEYFKKTYSDLAGPEYTAKYKTLIYLAGSASAEIIADIALCPFEAVKVRVQTQPGFARGMSDGFPKFIKSEGYGGLYKGLAPLWGRQIPYTMMKFASFETIVEMIYKYAIPNPKSECSKGLQLGVSFAGGYVAGVFCAIVSHPADNLVSFLNNAKGATVGDAVKKIGMVGLFTRGLPLRIVMIGTLTGAQWGLYDAFKVFVGLPTTGGVAPAPAIAATEAKA</sequence>
<gene>
    <name type="primary">MPT3</name>
    <name type="synonym">AT5</name>
    <name type="synonym">PHT3;1</name>
    <name type="ordered locus">At5g14040</name>
    <name type="ORF">MUA22_4</name>
</gene>
<feature type="transit peptide" description="Mitochondrion" evidence="1">
    <location>
        <begin position="1"/>
        <end status="unknown"/>
    </location>
</feature>
<feature type="chain" id="PRO_0000421697" description="Mitochondrial phosphate carrier protein 3, mitochondrial">
    <location>
        <begin status="unknown"/>
        <end position="375"/>
    </location>
</feature>
<feature type="topological domain" description="Mitochondrial intermembrane" evidence="1">
    <location>
        <begin status="unknown"/>
        <end position="75"/>
    </location>
</feature>
<feature type="transmembrane region" description="Helical; Name=1" evidence="1">
    <location>
        <begin position="76"/>
        <end position="96"/>
    </location>
</feature>
<feature type="topological domain" description="Mitochondrial matrix" evidence="1">
    <location>
        <begin position="97"/>
        <end position="134"/>
    </location>
</feature>
<feature type="transmembrane region" description="Helical; Name=2" evidence="1">
    <location>
        <begin position="135"/>
        <end position="154"/>
    </location>
</feature>
<feature type="topological domain" description="Mitochondrial intermembrane" evidence="1">
    <location>
        <begin position="155"/>
        <end position="175"/>
    </location>
</feature>
<feature type="transmembrane region" description="Helical; Name=3" evidence="1">
    <location>
        <begin position="176"/>
        <end position="196"/>
    </location>
</feature>
<feature type="topological domain" description="Mitochondrial matrix" evidence="1">
    <location>
        <begin position="197"/>
        <end position="231"/>
    </location>
</feature>
<feature type="transmembrane region" description="Helical; Name=4" evidence="1">
    <location>
        <begin position="232"/>
        <end position="251"/>
    </location>
</feature>
<feature type="topological domain" description="Mitochondrial intermembrane" evidence="1">
    <location>
        <begin position="252"/>
        <end position="272"/>
    </location>
</feature>
<feature type="transmembrane region" description="Helical; Name=5" evidence="1">
    <location>
        <begin position="273"/>
        <end position="293"/>
    </location>
</feature>
<feature type="topological domain" description="Mitochondrial matrix" evidence="1">
    <location>
        <begin position="294"/>
        <end position="332"/>
    </location>
</feature>
<feature type="transmembrane region" description="Helical; Name=6" evidence="1">
    <location>
        <begin position="333"/>
        <end position="353"/>
    </location>
</feature>
<feature type="topological domain" description="Mitochondrial intermembrane" evidence="1">
    <location>
        <begin position="354"/>
        <end position="375"/>
    </location>
</feature>
<feature type="repeat" description="Solcar 1">
    <location>
        <begin position="76"/>
        <end position="160"/>
    </location>
</feature>
<feature type="repeat" description="Solcar 2">
    <location>
        <begin position="173"/>
        <end position="257"/>
    </location>
</feature>
<feature type="repeat" description="Solcar 3">
    <location>
        <begin position="274"/>
        <end position="353"/>
    </location>
</feature>
<reference key="1">
    <citation type="journal article" date="1997" name="DNA Res.">
        <title>Structural analysis of Arabidopsis thaliana chromosome 5. III. Sequence features of the regions of 1,191,918 bp covered by seventeen physically assigned P1 clones.</title>
        <authorList>
            <person name="Nakamura Y."/>
            <person name="Sato S."/>
            <person name="Kaneko T."/>
            <person name="Kotani H."/>
            <person name="Asamizu E."/>
            <person name="Miyajima N."/>
            <person name="Tabata S."/>
        </authorList>
    </citation>
    <scope>NUCLEOTIDE SEQUENCE [LARGE SCALE GENOMIC DNA]</scope>
    <source>
        <strain>cv. Columbia</strain>
    </source>
</reference>
<reference key="2">
    <citation type="journal article" date="2017" name="Plant J.">
        <title>Araport11: a complete reannotation of the Arabidopsis thaliana reference genome.</title>
        <authorList>
            <person name="Cheng C.Y."/>
            <person name="Krishnakumar V."/>
            <person name="Chan A.P."/>
            <person name="Thibaud-Nissen F."/>
            <person name="Schobel S."/>
            <person name="Town C.D."/>
        </authorList>
    </citation>
    <scope>GENOME REANNOTATION</scope>
    <source>
        <strain>cv. Columbia</strain>
    </source>
</reference>
<reference key="3">
    <citation type="journal article" date="2003" name="Science">
        <title>Empirical analysis of transcriptional activity in the Arabidopsis genome.</title>
        <authorList>
            <person name="Yamada K."/>
            <person name="Lim J."/>
            <person name="Dale J.M."/>
            <person name="Chen H."/>
            <person name="Shinn P."/>
            <person name="Palm C.J."/>
            <person name="Southwick A.M."/>
            <person name="Wu H.C."/>
            <person name="Kim C.J."/>
            <person name="Nguyen M."/>
            <person name="Pham P.K."/>
            <person name="Cheuk R.F."/>
            <person name="Karlin-Newmann G."/>
            <person name="Liu S.X."/>
            <person name="Lam B."/>
            <person name="Sakano H."/>
            <person name="Wu T."/>
            <person name="Yu G."/>
            <person name="Miranda M."/>
            <person name="Quach H.L."/>
            <person name="Tripp M."/>
            <person name="Chang C.H."/>
            <person name="Lee J.M."/>
            <person name="Toriumi M.J."/>
            <person name="Chan M.M."/>
            <person name="Tang C.C."/>
            <person name="Onodera C.S."/>
            <person name="Deng J.M."/>
            <person name="Akiyama K."/>
            <person name="Ansari Y."/>
            <person name="Arakawa T."/>
            <person name="Banh J."/>
            <person name="Banno F."/>
            <person name="Bowser L."/>
            <person name="Brooks S.Y."/>
            <person name="Carninci P."/>
            <person name="Chao Q."/>
            <person name="Choy N."/>
            <person name="Enju A."/>
            <person name="Goldsmith A.D."/>
            <person name="Gurjal M."/>
            <person name="Hansen N.F."/>
            <person name="Hayashizaki Y."/>
            <person name="Johnson-Hopson C."/>
            <person name="Hsuan V.W."/>
            <person name="Iida K."/>
            <person name="Karnes M."/>
            <person name="Khan S."/>
            <person name="Koesema E."/>
            <person name="Ishida J."/>
            <person name="Jiang P.X."/>
            <person name="Jones T."/>
            <person name="Kawai J."/>
            <person name="Kamiya A."/>
            <person name="Meyers C."/>
            <person name="Nakajima M."/>
            <person name="Narusaka M."/>
            <person name="Seki M."/>
            <person name="Sakurai T."/>
            <person name="Satou M."/>
            <person name="Tamse R."/>
            <person name="Vaysberg M."/>
            <person name="Wallender E.K."/>
            <person name="Wong C."/>
            <person name="Yamamura Y."/>
            <person name="Yuan S."/>
            <person name="Shinozaki K."/>
            <person name="Davis R.W."/>
            <person name="Theologis A."/>
            <person name="Ecker J.R."/>
        </authorList>
    </citation>
    <scope>NUCLEOTIDE SEQUENCE [LARGE SCALE MRNA]</scope>
    <source>
        <strain>cv. Columbia</strain>
    </source>
</reference>
<reference key="4">
    <citation type="journal article" date="1999" name="Plant Mol. Biol.">
        <title>Isolation and characterization of cDNAs encoding mitochondrial phosphate transporters in soybean, maize, rice, and Arabidopsis.</title>
        <authorList>
            <person name="Takabatake R."/>
            <person name="Hata S."/>
            <person name="Taniguchi M."/>
            <person name="Kouchi H."/>
            <person name="Sugiyama T."/>
            <person name="Izui K."/>
        </authorList>
    </citation>
    <scope>NUCLEOTIDE SEQUENCE [MRNA] OF 88-375</scope>
    <source>
        <strain>cv. Columbia</strain>
    </source>
</reference>
<reference key="5">
    <citation type="submission" date="2005-03" db="EMBL/GenBank/DDBJ databases">
        <title>Large-scale analysis of RIKEN Arabidopsis full-length (RAFL) cDNAs.</title>
        <authorList>
            <person name="Totoki Y."/>
            <person name="Seki M."/>
            <person name="Ishida J."/>
            <person name="Nakajima M."/>
            <person name="Enju A."/>
            <person name="Kamiya A."/>
            <person name="Narusaka M."/>
            <person name="Shin-i T."/>
            <person name="Nakagawa M."/>
            <person name="Sakamoto N."/>
            <person name="Oishi K."/>
            <person name="Kohara Y."/>
            <person name="Kobayashi M."/>
            <person name="Toyoda A."/>
            <person name="Sakaki Y."/>
            <person name="Sakurai T."/>
            <person name="Iida K."/>
            <person name="Akiyama K."/>
            <person name="Satou M."/>
            <person name="Toyoda T."/>
            <person name="Konagaya A."/>
            <person name="Carninci P."/>
            <person name="Kawai J."/>
            <person name="Hayashizaki Y."/>
            <person name="Shinozaki K."/>
        </authorList>
    </citation>
    <scope>NUCLEOTIDE SEQUENCE [LARGE SCALE MRNA] OF 220-375</scope>
    <source>
        <strain>cv. Columbia</strain>
    </source>
</reference>
<reference key="6">
    <citation type="journal article" date="2004" name="Mol. Microbiol.">
        <title>Redundancy in the function of mitochondrial phosphate transport in Saccharomyces cerevisiae and Arabidopsis thaliana.</title>
        <authorList>
            <person name="Hamel P."/>
            <person name="Saint-Georges Y."/>
            <person name="de Pinto B."/>
            <person name="Lachacinski N."/>
            <person name="Altamura N."/>
            <person name="Dujardin G."/>
        </authorList>
    </citation>
    <scope>FUNCTION</scope>
</reference>
<reference key="7">
    <citation type="journal article" date="2004" name="Plant Cell">
        <title>Experimental analysis of the Arabidopsis mitochondrial proteome highlights signaling and regulatory components, provides assessment of targeting prediction programs, and indicates plant-specific mitochondrial proteins.</title>
        <authorList>
            <person name="Heazlewood J.L."/>
            <person name="Tonti-Filippini J.S."/>
            <person name="Gout A.M."/>
            <person name="Day D.A."/>
            <person name="Whelan J."/>
            <person name="Millar A.H."/>
        </authorList>
    </citation>
    <scope>IDENTIFICATION BY MASS SPECTROMETRY</scope>
    <scope>SUBCELLULAR LOCATION [LARGE SCALE ANALYSIS]</scope>
    <source>
        <strain>cv. Landsberg erecta</strain>
    </source>
</reference>
<reference key="8">
    <citation type="journal article" date="2004" name="Trends Plant Sci.">
        <title>The growing family of mitochondrial carriers in Arabidopsis.</title>
        <authorList>
            <person name="Picault N."/>
            <person name="Hodges M."/>
            <person name="Palmieri L."/>
            <person name="Palmieri F."/>
        </authorList>
    </citation>
    <scope>GENE FAMILY</scope>
</reference>
<reference key="9">
    <citation type="journal article" date="2012" name="PLoS ONE">
        <title>The mitochondrial phosphate transporters modulate plant responses to salt stress via affecting ATP and gibberellin metabolism in Arabidopsis thaliana.</title>
        <authorList>
            <person name="Zhu W."/>
            <person name="Miao Q."/>
            <person name="Sun D."/>
            <person name="Yang G."/>
            <person name="Wu C."/>
            <person name="Huang J."/>
            <person name="Zheng C."/>
        </authorList>
    </citation>
    <scope>GENE FAMILY</scope>
    <scope>TISSUE SPECIFICITY</scope>
    <scope>INDUCTION BY SALT</scope>
    <scope>FUNCTION</scope>
</reference>
<name>MPCP3_ARATH</name>
<accession>Q9FMU6</accession>
<accession>O80415</accession>
<accession>Q56WI0</accession>
<protein>
    <recommendedName>
        <fullName>Mitochondrial phosphate carrier protein 3, mitochondrial</fullName>
    </recommendedName>
    <alternativeName>
        <fullName>Mitochondrial phosphate transporter 3</fullName>
        <shortName>MPT3</shortName>
    </alternativeName>
    <alternativeName>
        <fullName>Phosphate transporter 3;1</fullName>
    </alternativeName>
</protein>
<comment type="function">
    <text evidence="3 4">Transport of phosphate groups from the cytosol to the mitochondrial matrix. Mediates salt stress tolerance through an ATP-dependent pathway and via modulation of the gibberellin metabolism.</text>
</comment>
<comment type="subcellular location">
    <subcellularLocation>
        <location evidence="2">Mitochondrion inner membrane</location>
        <topology evidence="2">Multi-pass membrane protein</topology>
    </subcellularLocation>
</comment>
<comment type="tissue specificity">
    <text evidence="4">Expressed in stems, leaves and flowers. Strong expression in vascular tissues.</text>
</comment>
<comment type="induction">
    <text evidence="4">By salt stress.</text>
</comment>
<comment type="miscellaneous">
    <text evidence="6">Plants overexpressing MPT3/PHT3;1 display increased sensitivity to salt stress.</text>
</comment>
<comment type="similarity">
    <text evidence="5">Belongs to the mitochondrial carrier (TC 2.A.29) family.</text>
</comment>
<comment type="sequence caution" evidence="5">
    <conflict type="erroneous initiation">
        <sequence resource="EMBL-CDS" id="BAD94852"/>
    </conflict>
    <text>Truncated N-terminus.</text>
</comment>